<sequence>MSSDSSREENVYLAKLAEQAERYEEMVEFMEKVAKTVETEELTVEERNLLSVAYKNVIGARRASWRIISSIEQKEDSRGNSDHVSIIKDYRGKIETELSKICDGILNLLEAHLIPAASLAESKVFYLKMKGDYHRYLAEFKTGAERKEAAESTLVAYKSAQDIALADLAPTHPIRLGLALNFSVFYYEILNSSDRACSLAKQAFDEAISELDTLGEESYKDSTLIMQLLRDNLTLWTSDLNDEAGDDIKEAPKEVQKVDEQAQPPPSQ</sequence>
<keyword id="KW-0963">Cytoplasm</keyword>
<keyword id="KW-0539">Nucleus</keyword>
<keyword id="KW-0597">Phosphoprotein</keyword>
<keyword id="KW-1185">Reference proteome</keyword>
<accession>P42645</accession>
<comment type="function">
    <text evidence="3">Is associated with a DNA binding complex that binds to the G box, a well-characterized cis-acting DNA regulatory element found in plant genes. May be involved in cell cycle regulation by binding to soluble EDE1 and sequestering it in an inactive form during the early stages of mitosis.</text>
</comment>
<comment type="subunit">
    <text evidence="3 4 5">Interacts with EDE1 (PubMed:21558460). Interacts with DREB1A and DREB1B in the nucleus (PubMed:28344081). Interacts with CINV1 (PubMed:25256212).</text>
</comment>
<comment type="subcellular location">
    <subcellularLocation>
        <location evidence="3">Cytoplasm</location>
    </subcellularLocation>
    <subcellularLocation>
        <location evidence="3">Nucleus</location>
    </subcellularLocation>
    <text evidence="1 3">Not associated with microtubules (PubMed:21558460). Translocates from the cytosol to the nucleus when phosphorylated (By similarity).</text>
</comment>
<comment type="similarity">
    <text evidence="6">Belongs to the 14-3-3 family.</text>
</comment>
<evidence type="ECO:0000250" key="1">
    <source>
        <dbReference type="UniProtKB" id="P48349"/>
    </source>
</evidence>
<evidence type="ECO:0000256" key="2">
    <source>
        <dbReference type="SAM" id="MobiDB-lite"/>
    </source>
</evidence>
<evidence type="ECO:0000269" key="3">
    <source>
    </source>
</evidence>
<evidence type="ECO:0000269" key="4">
    <source>
    </source>
</evidence>
<evidence type="ECO:0000269" key="5">
    <source>
    </source>
</evidence>
<evidence type="ECO:0000305" key="6"/>
<evidence type="ECO:0007744" key="7">
    <source>
    </source>
</evidence>
<name>14335_ARATH</name>
<feature type="chain" id="PRO_0000058667" description="14-3-3-like protein GF14 upsilon">
    <location>
        <begin position="1"/>
        <end position="268"/>
    </location>
</feature>
<feature type="region of interest" description="Disordered" evidence="2">
    <location>
        <begin position="243"/>
        <end position="268"/>
    </location>
</feature>
<feature type="compositionally biased region" description="Basic and acidic residues" evidence="2">
    <location>
        <begin position="246"/>
        <end position="260"/>
    </location>
</feature>
<feature type="modified residue" description="Phosphoserine" evidence="1">
    <location>
        <position position="69"/>
    </location>
</feature>
<feature type="modified residue" description="Phosphoserine" evidence="1">
    <location>
        <position position="192"/>
    </location>
</feature>
<feature type="modified residue" description="Phosphothreonine" evidence="1">
    <location>
        <position position="213"/>
    </location>
</feature>
<feature type="modified residue" description="Phosphoserine" evidence="7">
    <location>
        <position position="267"/>
    </location>
</feature>
<gene>
    <name type="primary">GRF5</name>
    <name type="ordered locus">At5g16050</name>
    <name type="ORF">F1N13_190</name>
</gene>
<proteinExistence type="evidence at protein level"/>
<organism>
    <name type="scientific">Arabidopsis thaliana</name>
    <name type="common">Mouse-ear cress</name>
    <dbReference type="NCBI Taxonomy" id="3702"/>
    <lineage>
        <taxon>Eukaryota</taxon>
        <taxon>Viridiplantae</taxon>
        <taxon>Streptophyta</taxon>
        <taxon>Embryophyta</taxon>
        <taxon>Tracheophyta</taxon>
        <taxon>Spermatophyta</taxon>
        <taxon>Magnoliopsida</taxon>
        <taxon>eudicotyledons</taxon>
        <taxon>Gunneridae</taxon>
        <taxon>Pentapetalae</taxon>
        <taxon>rosids</taxon>
        <taxon>malvids</taxon>
        <taxon>Brassicales</taxon>
        <taxon>Brassicaceae</taxon>
        <taxon>Camelineae</taxon>
        <taxon>Arabidopsis</taxon>
    </lineage>
</organism>
<protein>
    <recommendedName>
        <fullName>14-3-3-like protein GF14 upsilon</fullName>
    </recommendedName>
    <alternativeName>
        <fullName>General regulatory factor 5</fullName>
    </alternativeName>
</protein>
<dbReference type="EMBL" id="L09109">
    <property type="protein sequence ID" value="AAB06585.1"/>
    <property type="molecule type" value="mRNA"/>
</dbReference>
<dbReference type="EMBL" id="AF001415">
    <property type="protein sequence ID" value="AAB62225.1"/>
    <property type="molecule type" value="Genomic_DNA"/>
</dbReference>
<dbReference type="EMBL" id="AL391145">
    <property type="protein sequence ID" value="CAC01804.1"/>
    <property type="molecule type" value="Genomic_DNA"/>
</dbReference>
<dbReference type="EMBL" id="CP002688">
    <property type="protein sequence ID" value="AED92241.1"/>
    <property type="molecule type" value="Genomic_DNA"/>
</dbReference>
<dbReference type="EMBL" id="CP002688">
    <property type="protein sequence ID" value="ANM69323.1"/>
    <property type="molecule type" value="Genomic_DNA"/>
</dbReference>
<dbReference type="EMBL" id="AY035170">
    <property type="protein sequence ID" value="AAK59674.1"/>
    <property type="molecule type" value="mRNA"/>
</dbReference>
<dbReference type="EMBL" id="AY059115">
    <property type="protein sequence ID" value="AAL15221.1"/>
    <property type="molecule type" value="mRNA"/>
</dbReference>
<dbReference type="PIR" id="S71173">
    <property type="entry name" value="S71173"/>
</dbReference>
<dbReference type="PIR" id="T51388">
    <property type="entry name" value="T51388"/>
</dbReference>
<dbReference type="RefSeq" id="NP_001331015.1">
    <property type="nucleotide sequence ID" value="NM_001343435.1"/>
</dbReference>
<dbReference type="RefSeq" id="NP_568325.1">
    <property type="nucleotide sequence ID" value="NM_121610.4"/>
</dbReference>
<dbReference type="SMR" id="P42645"/>
<dbReference type="BioGRID" id="16738">
    <property type="interactions" value="61"/>
</dbReference>
<dbReference type="FunCoup" id="P42645">
    <property type="interactions" value="3630"/>
</dbReference>
<dbReference type="IntAct" id="P42645">
    <property type="interactions" value="6"/>
</dbReference>
<dbReference type="MINT" id="P42645"/>
<dbReference type="STRING" id="3702.P42645"/>
<dbReference type="iPTMnet" id="P42645"/>
<dbReference type="PaxDb" id="3702-AT5G16050.1"/>
<dbReference type="ProteomicsDB" id="244541"/>
<dbReference type="EnsemblPlants" id="AT5G16050.1">
    <property type="protein sequence ID" value="AT5G16050.1"/>
    <property type="gene ID" value="AT5G16050"/>
</dbReference>
<dbReference type="EnsemblPlants" id="AT5G16050.2">
    <property type="protein sequence ID" value="AT5G16050.2"/>
    <property type="gene ID" value="AT5G16050"/>
</dbReference>
<dbReference type="GeneID" id="831462"/>
<dbReference type="Gramene" id="AT5G16050.1">
    <property type="protein sequence ID" value="AT5G16050.1"/>
    <property type="gene ID" value="AT5G16050"/>
</dbReference>
<dbReference type="Gramene" id="AT5G16050.2">
    <property type="protein sequence ID" value="AT5G16050.2"/>
    <property type="gene ID" value="AT5G16050"/>
</dbReference>
<dbReference type="KEGG" id="ath:AT5G16050"/>
<dbReference type="Araport" id="AT5G16050"/>
<dbReference type="TAIR" id="AT5G16050">
    <property type="gene designation" value="GRF5"/>
</dbReference>
<dbReference type="eggNOG" id="KOG0841">
    <property type="taxonomic scope" value="Eukaryota"/>
</dbReference>
<dbReference type="HOGENOM" id="CLU_058290_0_0_1"/>
<dbReference type="InParanoid" id="P42645"/>
<dbReference type="OMA" id="WRLISNI"/>
<dbReference type="OrthoDB" id="10260625at2759"/>
<dbReference type="PhylomeDB" id="P42645"/>
<dbReference type="CD-CODE" id="4299E36E">
    <property type="entry name" value="Nucleolus"/>
</dbReference>
<dbReference type="PRO" id="PR:P42645"/>
<dbReference type="Proteomes" id="UP000006548">
    <property type="component" value="Chromosome 5"/>
</dbReference>
<dbReference type="ExpressionAtlas" id="P42645">
    <property type="expression patterns" value="baseline and differential"/>
</dbReference>
<dbReference type="GO" id="GO:0005829">
    <property type="term" value="C:cytosol"/>
    <property type="evidence" value="ECO:0007005"/>
    <property type="project" value="TAIR"/>
</dbReference>
<dbReference type="GO" id="GO:0005794">
    <property type="term" value="C:Golgi apparatus"/>
    <property type="evidence" value="ECO:0007005"/>
    <property type="project" value="TAIR"/>
</dbReference>
<dbReference type="GO" id="GO:0005739">
    <property type="term" value="C:mitochondrion"/>
    <property type="evidence" value="ECO:0007005"/>
    <property type="project" value="TAIR"/>
</dbReference>
<dbReference type="GO" id="GO:0005634">
    <property type="term" value="C:nucleus"/>
    <property type="evidence" value="ECO:0007669"/>
    <property type="project" value="UniProtKB-SubCell"/>
</dbReference>
<dbReference type="GO" id="GO:0009505">
    <property type="term" value="C:plant-type cell wall"/>
    <property type="evidence" value="ECO:0007005"/>
    <property type="project" value="TAIR"/>
</dbReference>
<dbReference type="GO" id="GO:0005886">
    <property type="term" value="C:plasma membrane"/>
    <property type="evidence" value="ECO:0007005"/>
    <property type="project" value="TAIR"/>
</dbReference>
<dbReference type="GO" id="GO:0009536">
    <property type="term" value="C:plastid"/>
    <property type="evidence" value="ECO:0007005"/>
    <property type="project" value="TAIR"/>
</dbReference>
<dbReference type="GO" id="GO:0005524">
    <property type="term" value="F:ATP binding"/>
    <property type="evidence" value="ECO:0007005"/>
    <property type="project" value="TAIR"/>
</dbReference>
<dbReference type="FunFam" id="1.20.190.20:FF:000002">
    <property type="entry name" value="14-3-3 protein epsilon"/>
    <property type="match status" value="1"/>
</dbReference>
<dbReference type="Gene3D" id="1.20.190.20">
    <property type="entry name" value="14-3-3 domain"/>
    <property type="match status" value="1"/>
</dbReference>
<dbReference type="InterPro" id="IPR000308">
    <property type="entry name" value="14-3-3"/>
</dbReference>
<dbReference type="InterPro" id="IPR023409">
    <property type="entry name" value="14-3-3_CS"/>
</dbReference>
<dbReference type="InterPro" id="IPR036815">
    <property type="entry name" value="14-3-3_dom_sf"/>
</dbReference>
<dbReference type="InterPro" id="IPR023410">
    <property type="entry name" value="14-3-3_domain"/>
</dbReference>
<dbReference type="PANTHER" id="PTHR18860">
    <property type="entry name" value="14-3-3 PROTEIN"/>
    <property type="match status" value="1"/>
</dbReference>
<dbReference type="Pfam" id="PF00244">
    <property type="entry name" value="14-3-3"/>
    <property type="match status" value="1"/>
</dbReference>
<dbReference type="PIRSF" id="PIRSF000868">
    <property type="entry name" value="14-3-3"/>
    <property type="match status" value="1"/>
</dbReference>
<dbReference type="PRINTS" id="PR00305">
    <property type="entry name" value="1433ZETA"/>
</dbReference>
<dbReference type="SMART" id="SM00101">
    <property type="entry name" value="14_3_3"/>
    <property type="match status" value="1"/>
</dbReference>
<dbReference type="SUPFAM" id="SSF48445">
    <property type="entry name" value="14-3-3 protein"/>
    <property type="match status" value="1"/>
</dbReference>
<dbReference type="PROSITE" id="PS00796">
    <property type="entry name" value="1433_1"/>
    <property type="match status" value="1"/>
</dbReference>
<dbReference type="PROSITE" id="PS00797">
    <property type="entry name" value="1433_2"/>
    <property type="match status" value="1"/>
</dbReference>
<reference key="1">
    <citation type="journal article" date="1994" name="Plant Physiol.">
        <title>Five cDNAs encoding Arabidopsis GF14 proteins.</title>
        <authorList>
            <person name="Lu G."/>
            <person name="Rooney M.F."/>
            <person name="Wu K."/>
            <person name="Ferl R.J."/>
        </authorList>
    </citation>
    <scope>NUCLEOTIDE SEQUENCE [MRNA]</scope>
    <source>
        <strain>cv. Columbia</strain>
    </source>
</reference>
<reference key="2">
    <citation type="submission" date="1996-08" db="EMBL/GenBank/DDBJ databases">
        <authorList>
            <person name="Ferl R.J."/>
            <person name="Lu G."/>
        </authorList>
    </citation>
    <scope>SEQUENCE REVISION TO 73; 182 AND C-TERMINUS</scope>
</reference>
<reference key="3">
    <citation type="journal article" date="1997" name="Plant Physiol.">
        <title>The Arabidopsis 14-3-3 multigene family.</title>
        <authorList>
            <person name="Wu K."/>
            <person name="Rooney M.F."/>
            <person name="Ferl R.J."/>
        </authorList>
    </citation>
    <scope>NUCLEOTIDE SEQUENCE [GENOMIC DNA]</scope>
</reference>
<reference key="4">
    <citation type="journal article" date="2000" name="Nature">
        <title>Sequence and analysis of chromosome 5 of the plant Arabidopsis thaliana.</title>
        <authorList>
            <person name="Tabata S."/>
            <person name="Kaneko T."/>
            <person name="Nakamura Y."/>
            <person name="Kotani H."/>
            <person name="Kato T."/>
            <person name="Asamizu E."/>
            <person name="Miyajima N."/>
            <person name="Sasamoto S."/>
            <person name="Kimura T."/>
            <person name="Hosouchi T."/>
            <person name="Kawashima K."/>
            <person name="Kohara M."/>
            <person name="Matsumoto M."/>
            <person name="Matsuno A."/>
            <person name="Muraki A."/>
            <person name="Nakayama S."/>
            <person name="Nakazaki N."/>
            <person name="Naruo K."/>
            <person name="Okumura S."/>
            <person name="Shinpo S."/>
            <person name="Takeuchi C."/>
            <person name="Wada T."/>
            <person name="Watanabe A."/>
            <person name="Yamada M."/>
            <person name="Yasuda M."/>
            <person name="Sato S."/>
            <person name="de la Bastide M."/>
            <person name="Huang E."/>
            <person name="Spiegel L."/>
            <person name="Gnoj L."/>
            <person name="O'Shaughnessy A."/>
            <person name="Preston R."/>
            <person name="Habermann K."/>
            <person name="Murray J."/>
            <person name="Johnson D."/>
            <person name="Rohlfing T."/>
            <person name="Nelson J."/>
            <person name="Stoneking T."/>
            <person name="Pepin K."/>
            <person name="Spieth J."/>
            <person name="Sekhon M."/>
            <person name="Armstrong J."/>
            <person name="Becker M."/>
            <person name="Belter E."/>
            <person name="Cordum H."/>
            <person name="Cordes M."/>
            <person name="Courtney L."/>
            <person name="Courtney W."/>
            <person name="Dante M."/>
            <person name="Du H."/>
            <person name="Edwards J."/>
            <person name="Fryman J."/>
            <person name="Haakensen B."/>
            <person name="Lamar E."/>
            <person name="Latreille P."/>
            <person name="Leonard S."/>
            <person name="Meyer R."/>
            <person name="Mulvaney E."/>
            <person name="Ozersky P."/>
            <person name="Riley A."/>
            <person name="Strowmatt C."/>
            <person name="Wagner-McPherson C."/>
            <person name="Wollam A."/>
            <person name="Yoakum M."/>
            <person name="Bell M."/>
            <person name="Dedhia N."/>
            <person name="Parnell L."/>
            <person name="Shah R."/>
            <person name="Rodriguez M."/>
            <person name="Hoon See L."/>
            <person name="Vil D."/>
            <person name="Baker J."/>
            <person name="Kirchoff K."/>
            <person name="Toth K."/>
            <person name="King L."/>
            <person name="Bahret A."/>
            <person name="Miller B."/>
            <person name="Marra M.A."/>
            <person name="Martienssen R."/>
            <person name="McCombie W.R."/>
            <person name="Wilson R.K."/>
            <person name="Murphy G."/>
            <person name="Bancroft I."/>
            <person name="Volckaert G."/>
            <person name="Wambutt R."/>
            <person name="Duesterhoeft A."/>
            <person name="Stiekema W."/>
            <person name="Pohl T."/>
            <person name="Entian K.-D."/>
            <person name="Terryn N."/>
            <person name="Hartley N."/>
            <person name="Bent E."/>
            <person name="Johnson S."/>
            <person name="Langham S.-A."/>
            <person name="McCullagh B."/>
            <person name="Robben J."/>
            <person name="Grymonprez B."/>
            <person name="Zimmermann W."/>
            <person name="Ramsperger U."/>
            <person name="Wedler H."/>
            <person name="Balke K."/>
            <person name="Wedler E."/>
            <person name="Peters S."/>
            <person name="van Staveren M."/>
            <person name="Dirkse W."/>
            <person name="Mooijman P."/>
            <person name="Klein Lankhorst R."/>
            <person name="Weitzenegger T."/>
            <person name="Bothe G."/>
            <person name="Rose M."/>
            <person name="Hauf J."/>
            <person name="Berneiser S."/>
            <person name="Hempel S."/>
            <person name="Feldpausch M."/>
            <person name="Lamberth S."/>
            <person name="Villarroel R."/>
            <person name="Gielen J."/>
            <person name="Ardiles W."/>
            <person name="Bents O."/>
            <person name="Lemcke K."/>
            <person name="Kolesov G."/>
            <person name="Mayer K.F.X."/>
            <person name="Rudd S."/>
            <person name="Schoof H."/>
            <person name="Schueller C."/>
            <person name="Zaccaria P."/>
            <person name="Mewes H.-W."/>
            <person name="Bevan M."/>
            <person name="Fransz P.F."/>
        </authorList>
    </citation>
    <scope>NUCLEOTIDE SEQUENCE [LARGE SCALE GENOMIC DNA]</scope>
    <source>
        <strain>cv. Columbia</strain>
    </source>
</reference>
<reference key="5">
    <citation type="journal article" date="2017" name="Plant J.">
        <title>Araport11: a complete reannotation of the Arabidopsis thaliana reference genome.</title>
        <authorList>
            <person name="Cheng C.Y."/>
            <person name="Krishnakumar V."/>
            <person name="Chan A.P."/>
            <person name="Thibaud-Nissen F."/>
            <person name="Schobel S."/>
            <person name="Town C.D."/>
        </authorList>
    </citation>
    <scope>GENOME REANNOTATION</scope>
    <source>
        <strain>cv. Columbia</strain>
    </source>
</reference>
<reference key="6">
    <citation type="journal article" date="2003" name="Science">
        <title>Empirical analysis of transcriptional activity in the Arabidopsis genome.</title>
        <authorList>
            <person name="Yamada K."/>
            <person name="Lim J."/>
            <person name="Dale J.M."/>
            <person name="Chen H."/>
            <person name="Shinn P."/>
            <person name="Palm C.J."/>
            <person name="Southwick A.M."/>
            <person name="Wu H.C."/>
            <person name="Kim C.J."/>
            <person name="Nguyen M."/>
            <person name="Pham P.K."/>
            <person name="Cheuk R.F."/>
            <person name="Karlin-Newmann G."/>
            <person name="Liu S.X."/>
            <person name="Lam B."/>
            <person name="Sakano H."/>
            <person name="Wu T."/>
            <person name="Yu G."/>
            <person name="Miranda M."/>
            <person name="Quach H.L."/>
            <person name="Tripp M."/>
            <person name="Chang C.H."/>
            <person name="Lee J.M."/>
            <person name="Toriumi M.J."/>
            <person name="Chan M.M."/>
            <person name="Tang C.C."/>
            <person name="Onodera C.S."/>
            <person name="Deng J.M."/>
            <person name="Akiyama K."/>
            <person name="Ansari Y."/>
            <person name="Arakawa T."/>
            <person name="Banh J."/>
            <person name="Banno F."/>
            <person name="Bowser L."/>
            <person name="Brooks S.Y."/>
            <person name="Carninci P."/>
            <person name="Chao Q."/>
            <person name="Choy N."/>
            <person name="Enju A."/>
            <person name="Goldsmith A.D."/>
            <person name="Gurjal M."/>
            <person name="Hansen N.F."/>
            <person name="Hayashizaki Y."/>
            <person name="Johnson-Hopson C."/>
            <person name="Hsuan V.W."/>
            <person name="Iida K."/>
            <person name="Karnes M."/>
            <person name="Khan S."/>
            <person name="Koesema E."/>
            <person name="Ishida J."/>
            <person name="Jiang P.X."/>
            <person name="Jones T."/>
            <person name="Kawai J."/>
            <person name="Kamiya A."/>
            <person name="Meyers C."/>
            <person name="Nakajima M."/>
            <person name="Narusaka M."/>
            <person name="Seki M."/>
            <person name="Sakurai T."/>
            <person name="Satou M."/>
            <person name="Tamse R."/>
            <person name="Vaysberg M."/>
            <person name="Wallender E.K."/>
            <person name="Wong C."/>
            <person name="Yamamura Y."/>
            <person name="Yuan S."/>
            <person name="Shinozaki K."/>
            <person name="Davis R.W."/>
            <person name="Theologis A."/>
            <person name="Ecker J.R."/>
        </authorList>
    </citation>
    <scope>NUCLEOTIDE SEQUENCE [LARGE SCALE MRNA]</scope>
    <source>
        <strain>cv. Columbia</strain>
    </source>
</reference>
<reference key="7">
    <citation type="journal article" date="2009" name="Plant Physiol.">
        <title>Large-scale Arabidopsis phosphoproteome profiling reveals novel chloroplast kinase substrates and phosphorylation networks.</title>
        <authorList>
            <person name="Reiland S."/>
            <person name="Messerli G."/>
            <person name="Baerenfaller K."/>
            <person name="Gerrits B."/>
            <person name="Endler A."/>
            <person name="Grossmann J."/>
            <person name="Gruissem W."/>
            <person name="Baginsky S."/>
        </authorList>
    </citation>
    <scope>PHOSPHORYLATION [LARGE SCALE ANALYSIS] AT SER-267</scope>
    <scope>IDENTIFICATION BY MASS SPECTROMETRY [LARGE SCALE ANALYSIS]</scope>
</reference>
<reference key="8">
    <citation type="journal article" date="2011" name="Ann. Bot.">
        <title>Interaction of a 14-3-3 protein with the plant microtubule-associated protein EDE1.</title>
        <authorList>
            <person name="Pignocchi C."/>
            <person name="Doonan J.H."/>
        </authorList>
    </citation>
    <scope>FUNCTION</scope>
    <scope>INTERACTION WITH EDE1</scope>
    <scope>SUBCELLULAR LOCATION</scope>
</reference>
<reference key="9">
    <citation type="journal article" date="2014" name="Plant J.">
        <title>Light modulated activity of root alkaline/neutral invertase involves the interaction with 14-3-3 proteins.</title>
        <authorList>
            <person name="Gao J."/>
            <person name="van Kleeff P.J."/>
            <person name="Oecking C."/>
            <person name="Li K.W."/>
            <person name="Erban A."/>
            <person name="Kopka J."/>
            <person name="Hincha D.K."/>
            <person name="de Boer A.H."/>
        </authorList>
    </citation>
    <scope>INTERACTION WITH CINV1</scope>
</reference>
<reference key="10">
    <citation type="journal article" date="2017" name="Mol. Cell">
        <title>Plasma membrane CRPK1-mediated phosphorylation of 14-3-3 proteins induces their nuclear import to fine-tune CBF signaling during cold response.</title>
        <authorList>
            <person name="Liu Z."/>
            <person name="Jia Y."/>
            <person name="Ding Y."/>
            <person name="Shi Y."/>
            <person name="Li Z."/>
            <person name="Guo Y."/>
            <person name="Gong Z."/>
            <person name="Yang S."/>
        </authorList>
    </citation>
    <scope>INTERACTION WITH DREB1A AND DREB1B</scope>
    <source>
        <strain>cv. Columbia</strain>
    </source>
</reference>